<organism>
    <name type="scientific">Aspergillus violaceofuscus (strain CBS 115571)</name>
    <dbReference type="NCBI Taxonomy" id="1450538"/>
    <lineage>
        <taxon>Eukaryota</taxon>
        <taxon>Fungi</taxon>
        <taxon>Dikarya</taxon>
        <taxon>Ascomycota</taxon>
        <taxon>Pezizomycotina</taxon>
        <taxon>Eurotiomycetes</taxon>
        <taxon>Eurotiomycetidae</taxon>
        <taxon>Eurotiales</taxon>
        <taxon>Aspergillaceae</taxon>
        <taxon>Aspergillus</taxon>
    </lineage>
</organism>
<sequence>MGSAPDNDSTPLDGDFEREVYEALKLWKIPGIAIAVIDEESTWTEGYGIADLASSTKVEANTLFYGGSTTKAFTAALMSMLVEDNDRYPHVQWSTPVCELIRDDFVLGHPGRTADTTIEDILSHRTGMPGHDFSMGSVHAGQQATVQDVVRSLRFLPAAAPPRTTYIYNNAMYIVASHLIQTVTGEELRSLFQRYIWDPLGMSHTYLRLKDAVAGQEPLAKGYADESATDDDPQYEEVPWKDRPEISGAGAIISSVGDYAKWVHALMNPEASSSSSSSSDSTATTSLSAAICADVGTARTLIPPPSEPFLTPMAYCLGWNRYVYRGVEILTHDGGIDGFGAEIAMIPALKYGVVTMANSTYTSNFGGTCLVYKLIDDKLGIPAEDRYDWTQKYTDLVAQMDAYNANAVSYFYPTLPDPPRPGPTLPLAAYAGLYWHDGYGALELVLDAADGKLHATRTQAQYTTACALTFEHISGDFFTATVAVVGAQTVVPAEFALSPAGVPRAIGIGWEPHLGTEKRTWMRRVGADEAGRLLRGDQSHPHHAEAYVSYQREEAQLPEFLTSHLFV</sequence>
<gene>
    <name evidence="2" type="primary">ungD</name>
    <name type="ORF">BO99DRAFT_296222</name>
</gene>
<protein>
    <recommendedName>
        <fullName evidence="2">Unguisins hydrolase ungD</fullName>
        <ecNumber evidence="1">3.4.-.-</ecNumber>
    </recommendedName>
    <alternativeName>
        <fullName evidence="2">Unguisins biosynthesis cluster protein D</fullName>
    </alternativeName>
</protein>
<dbReference type="EC" id="3.4.-.-" evidence="1"/>
<dbReference type="EMBL" id="KZ825194">
    <property type="protein sequence ID" value="PYI15148.1"/>
    <property type="status" value="ALT_SEQ"/>
    <property type="molecule type" value="Genomic_DNA"/>
</dbReference>
<dbReference type="SMR" id="A0A2V5GVB6"/>
<dbReference type="STRING" id="1450538.A0A2V5GVB6"/>
<dbReference type="Proteomes" id="UP000249829">
    <property type="component" value="Unassembled WGS sequence"/>
</dbReference>
<dbReference type="GO" id="GO:0016787">
    <property type="term" value="F:hydrolase activity"/>
    <property type="evidence" value="ECO:0007669"/>
    <property type="project" value="UniProtKB-KW"/>
</dbReference>
<dbReference type="Gene3D" id="2.40.128.600">
    <property type="match status" value="1"/>
</dbReference>
<dbReference type="Gene3D" id="3.40.710.10">
    <property type="entry name" value="DD-peptidase/beta-lactamase superfamily"/>
    <property type="match status" value="1"/>
</dbReference>
<dbReference type="InterPro" id="IPR050491">
    <property type="entry name" value="Bact_CellWall_Synth/Modif"/>
</dbReference>
<dbReference type="InterPro" id="IPR001466">
    <property type="entry name" value="Beta-lactam-related"/>
</dbReference>
<dbReference type="InterPro" id="IPR012338">
    <property type="entry name" value="Beta-lactam/transpept-like"/>
</dbReference>
<dbReference type="InterPro" id="IPR021860">
    <property type="entry name" value="Peptidase_S12_Pab87-rel_C"/>
</dbReference>
<dbReference type="PANTHER" id="PTHR46825:SF9">
    <property type="entry name" value="BETA-LACTAMASE-RELATED DOMAIN-CONTAINING PROTEIN"/>
    <property type="match status" value="1"/>
</dbReference>
<dbReference type="PANTHER" id="PTHR46825">
    <property type="entry name" value="D-ALANYL-D-ALANINE-CARBOXYPEPTIDASE/ENDOPEPTIDASE AMPH"/>
    <property type="match status" value="1"/>
</dbReference>
<dbReference type="Pfam" id="PF00144">
    <property type="entry name" value="Beta-lactamase"/>
    <property type="match status" value="1"/>
</dbReference>
<dbReference type="Pfam" id="PF11954">
    <property type="entry name" value="DUF3471"/>
    <property type="match status" value="1"/>
</dbReference>
<dbReference type="SUPFAM" id="SSF56601">
    <property type="entry name" value="beta-lactamase/transpeptidase-like"/>
    <property type="match status" value="1"/>
</dbReference>
<reference key="1">
    <citation type="submission" date="2018-02" db="EMBL/GenBank/DDBJ databases">
        <title>The genomes of Aspergillus section Nigri reveals drivers in fungal speciation.</title>
        <authorList>
            <consortium name="DOE Joint Genome Institute"/>
            <person name="Vesth T.C."/>
            <person name="Nybo J."/>
            <person name="Theobald S."/>
            <person name="Brandl J."/>
            <person name="Frisvad J.C."/>
            <person name="Nielsen K.F."/>
            <person name="Lyhne E.K."/>
            <person name="Kogle M.E."/>
            <person name="Kuo A."/>
            <person name="Riley R."/>
            <person name="Clum A."/>
            <person name="Nolan M."/>
            <person name="Lipzen A."/>
            <person name="Salamov A."/>
            <person name="Henrissat B."/>
            <person name="Wiebenga A."/>
            <person name="De vries R.P."/>
            <person name="Grigoriev I.V."/>
            <person name="Mortensen U.H."/>
            <person name="Andersen M.R."/>
            <person name="Baker S.E."/>
        </authorList>
    </citation>
    <scope>NUCLEOTIDE SEQUENCE [LARGE SCALE GENOMIC DNA]</scope>
    <source>
        <strain>CBS 115571</strain>
    </source>
</reference>
<reference key="2">
    <citation type="journal article" date="2023" name="J. Nat. Prod.">
        <title>Biosynthetic characterization, heterologous production, and genomics-guided discovery of GABA-containing fungal heptapeptides.</title>
        <authorList>
            <person name="Wei X."/>
            <person name="Chan T.K."/>
            <person name="Kong C.T.D."/>
            <person name="Matsuda Y."/>
        </authorList>
    </citation>
    <scope>FUNCTION</scope>
    <scope>CATALYTIC ACTIVITY</scope>
    <scope>DISRUPTION PHENOTYPE</scope>
    <scope>PATHWAY</scope>
</reference>
<proteinExistence type="evidence at protein level"/>
<evidence type="ECO:0000269" key="1">
    <source>
    </source>
</evidence>
<evidence type="ECO:0000303" key="2">
    <source>
    </source>
</evidence>
<evidence type="ECO:0000305" key="3"/>
<evidence type="ECO:0000305" key="4">
    <source>
    </source>
</evidence>
<accession>A0A2V5GVB6</accession>
<feature type="chain" id="PRO_0000458912" description="Unguisins hydrolase ungD">
    <location>
        <begin position="1"/>
        <end position="567"/>
    </location>
</feature>
<keyword id="KW-0378">Hydrolase</keyword>
<keyword id="KW-1185">Reference proteome</keyword>
<name>UNGD_ASPV1</name>
<comment type="function">
    <text evidence="1">Hydrolase; part of the gene cluster that mediates the biosynthesis of the unguisins, gamma-aminobutyric acid (GABA)-containing fungal cyclic heptapeptides with the amino acid sequence cyclo-(D-Ala1-D-Val2-L-Phe3-D-Val4-D-Ala5-D-Trp6-GABA7) for unguisin A and cyclo-(D-Ala1-D-Val2-L-Leu3-D-Val4-D-Ala5-D-Trp6-GABA7) for unguisin B (PubMed:36715406). Within the pathway, the hydrolase ungD catalyzes the hydrolysis between the D-tryptophan and GABA residues of unguisins A and B to produce the corresponding linear peptides (PubMed:36715406). The alanine racemase ungC catalyzes the interconversion of L-alanine and D-alanine, providing the D-alanine which is accepted by the first adenylation domain of the nonribosomal peptide synthetase (NRPS) ungA (PubMed:36715406). UngA is the main enzyme within the cluster which condenses the 7 residues using its respective 7 modules (PubMed:36715406). The terminal condensation domain (Ct) is involved in cyclization with D-alanine and thereby releasing of unguisins A and B (PubMed:36715406).</text>
</comment>
<comment type="pathway">
    <text evidence="1">Secondary metabolite biosynthesis.</text>
</comment>
<comment type="disruption phenotype">
    <text evidence="1">Does not affect the production of unguisin A and B.</text>
</comment>
<comment type="similarity">
    <text evidence="3">Belongs to the peptidase S12 family.</text>
</comment>
<comment type="sequence caution" evidence="4">
    <conflict type="erroneous gene model prediction">
        <sequence resource="EMBL-CDS" id="PYI15148"/>
    </conflict>
</comment>